<name>LOLA_NEIG1</name>
<organism>
    <name type="scientific">Neisseria gonorrhoeae (strain ATCC 700825 / FA 1090)</name>
    <dbReference type="NCBI Taxonomy" id="242231"/>
    <lineage>
        <taxon>Bacteria</taxon>
        <taxon>Pseudomonadati</taxon>
        <taxon>Pseudomonadota</taxon>
        <taxon>Betaproteobacteria</taxon>
        <taxon>Neisseriales</taxon>
        <taxon>Neisseriaceae</taxon>
        <taxon>Neisseria</taxon>
    </lineage>
</organism>
<sequence>MMKPHNLFQFLAVCSLTVAVASAQAGAVDALKQFNNDADGISGSFTQTVQSKKKTQTAHGTFKILRPGLFKWEYTLPYRQTIVGDGQTVWLYDVDLAQVTKSSQDQAIGGSPAAILSNKTALESSYTLKEDGSSNGIDYVRATPKRNNAGYQYIRIGFKGGNLAAMQLKDSFGNQTSISFGGLNTNPQLSRGAFKFTPPKGVDVLSN</sequence>
<evidence type="ECO:0000255" key="1">
    <source>
        <dbReference type="HAMAP-Rule" id="MF_00240"/>
    </source>
</evidence>
<reference key="1">
    <citation type="submission" date="2003-03" db="EMBL/GenBank/DDBJ databases">
        <title>The complete genome sequence of Neisseria gonorrhoeae.</title>
        <authorList>
            <person name="Lewis L.A."/>
            <person name="Gillaspy A.F."/>
            <person name="McLaughlin R.E."/>
            <person name="Gipson M."/>
            <person name="Ducey T.F."/>
            <person name="Ownbey T."/>
            <person name="Hartman K."/>
            <person name="Nydick C."/>
            <person name="Carson M.B."/>
            <person name="Vaughn J."/>
            <person name="Thomson C."/>
            <person name="Song L."/>
            <person name="Lin S."/>
            <person name="Yuan X."/>
            <person name="Najar F."/>
            <person name="Zhan M."/>
            <person name="Ren Q."/>
            <person name="Zhu H."/>
            <person name="Qi S."/>
            <person name="Kenton S.M."/>
            <person name="Lai H."/>
            <person name="White J.D."/>
            <person name="Clifton S."/>
            <person name="Roe B.A."/>
            <person name="Dyer D.W."/>
        </authorList>
    </citation>
    <scope>NUCLEOTIDE SEQUENCE [LARGE SCALE GENOMIC DNA]</scope>
    <source>
        <strain>ATCC 700825 / FA 1090</strain>
    </source>
</reference>
<dbReference type="EMBL" id="AE004969">
    <property type="protein sequence ID" value="AAW88958.1"/>
    <property type="molecule type" value="Genomic_DNA"/>
</dbReference>
<dbReference type="RefSeq" id="WP_003702312.1">
    <property type="nucleotide sequence ID" value="NC_002946.2"/>
</dbReference>
<dbReference type="RefSeq" id="YP_207370.1">
    <property type="nucleotide sequence ID" value="NC_002946.2"/>
</dbReference>
<dbReference type="SMR" id="Q5FA29"/>
<dbReference type="STRING" id="242231.NGO_0205"/>
<dbReference type="KEGG" id="ngo:NGO_0205"/>
<dbReference type="PATRIC" id="fig|242231.10.peg.255"/>
<dbReference type="HOGENOM" id="CLU_087560_0_1_4"/>
<dbReference type="Proteomes" id="UP000000535">
    <property type="component" value="Chromosome"/>
</dbReference>
<dbReference type="GO" id="GO:0042597">
    <property type="term" value="C:periplasmic space"/>
    <property type="evidence" value="ECO:0007669"/>
    <property type="project" value="UniProtKB-SubCell"/>
</dbReference>
<dbReference type="GO" id="GO:0044874">
    <property type="term" value="P:lipoprotein localization to outer membrane"/>
    <property type="evidence" value="ECO:0007669"/>
    <property type="project" value="UniProtKB-UniRule"/>
</dbReference>
<dbReference type="GO" id="GO:0042953">
    <property type="term" value="P:lipoprotein transport"/>
    <property type="evidence" value="ECO:0007669"/>
    <property type="project" value="InterPro"/>
</dbReference>
<dbReference type="CDD" id="cd16325">
    <property type="entry name" value="LolA"/>
    <property type="match status" value="1"/>
</dbReference>
<dbReference type="FunFam" id="2.50.20.10:FF:000008">
    <property type="entry name" value="Outer-membrane lipoprotein carrier protein"/>
    <property type="match status" value="1"/>
</dbReference>
<dbReference type="Gene3D" id="2.50.20.10">
    <property type="entry name" value="Lipoprotein localisation LolA/LolB/LppX"/>
    <property type="match status" value="1"/>
</dbReference>
<dbReference type="HAMAP" id="MF_00240">
    <property type="entry name" value="LolA"/>
    <property type="match status" value="1"/>
</dbReference>
<dbReference type="InterPro" id="IPR029046">
    <property type="entry name" value="LolA/LolB/LppX"/>
</dbReference>
<dbReference type="InterPro" id="IPR004564">
    <property type="entry name" value="OM_lipoprot_carrier_LolA-like"/>
</dbReference>
<dbReference type="InterPro" id="IPR018323">
    <property type="entry name" value="OM_lipoprot_carrier_LolA_Pbac"/>
</dbReference>
<dbReference type="NCBIfam" id="TIGR00547">
    <property type="entry name" value="lolA"/>
    <property type="match status" value="1"/>
</dbReference>
<dbReference type="PANTHER" id="PTHR35869">
    <property type="entry name" value="OUTER-MEMBRANE LIPOPROTEIN CARRIER PROTEIN"/>
    <property type="match status" value="1"/>
</dbReference>
<dbReference type="PANTHER" id="PTHR35869:SF1">
    <property type="entry name" value="OUTER-MEMBRANE LIPOPROTEIN CARRIER PROTEIN"/>
    <property type="match status" value="1"/>
</dbReference>
<dbReference type="Pfam" id="PF03548">
    <property type="entry name" value="LolA"/>
    <property type="match status" value="1"/>
</dbReference>
<dbReference type="SUPFAM" id="SSF89392">
    <property type="entry name" value="Prokaryotic lipoproteins and lipoprotein localization factors"/>
    <property type="match status" value="1"/>
</dbReference>
<comment type="function">
    <text evidence="1">Participates in the translocation of lipoproteins from the inner membrane to the outer membrane. Only forms a complex with a lipoprotein if the residue after the N-terminal Cys is not an aspartate (The Asp acts as a targeting signal to indicate that the lipoprotein should stay in the inner membrane).</text>
</comment>
<comment type="subunit">
    <text evidence="1">Monomer.</text>
</comment>
<comment type="subcellular location">
    <subcellularLocation>
        <location evidence="1">Periplasm</location>
    </subcellularLocation>
</comment>
<comment type="similarity">
    <text evidence="1">Belongs to the LolA family.</text>
</comment>
<keyword id="KW-0143">Chaperone</keyword>
<keyword id="KW-0574">Periplasm</keyword>
<keyword id="KW-0653">Protein transport</keyword>
<keyword id="KW-1185">Reference proteome</keyword>
<keyword id="KW-0732">Signal</keyword>
<keyword id="KW-0813">Transport</keyword>
<feature type="signal peptide" evidence="1">
    <location>
        <begin position="1"/>
        <end position="23"/>
    </location>
</feature>
<feature type="chain" id="PRO_1000005698" description="Outer-membrane lipoprotein carrier protein">
    <location>
        <begin position="24"/>
        <end position="207"/>
    </location>
</feature>
<protein>
    <recommendedName>
        <fullName evidence="1">Outer-membrane lipoprotein carrier protein</fullName>
    </recommendedName>
</protein>
<proteinExistence type="inferred from homology"/>
<gene>
    <name evidence="1" type="primary">lolA</name>
    <name type="ordered locus">NGO_0205</name>
</gene>
<accession>Q5FA29</accession>